<comment type="function">
    <text evidence="1">Probably functions as a manganese efflux pump.</text>
</comment>
<comment type="subcellular location">
    <subcellularLocation>
        <location evidence="1">Cell inner membrane</location>
        <topology evidence="1">Multi-pass membrane protein</topology>
    </subcellularLocation>
</comment>
<comment type="similarity">
    <text evidence="1">Belongs to the MntP (TC 9.B.29) family.</text>
</comment>
<evidence type="ECO:0000255" key="1">
    <source>
        <dbReference type="HAMAP-Rule" id="MF_01521"/>
    </source>
</evidence>
<accession>Q8P3J6</accession>
<dbReference type="EMBL" id="AE008922">
    <property type="protein sequence ID" value="AAM43296.1"/>
    <property type="molecule type" value="Genomic_DNA"/>
</dbReference>
<dbReference type="RefSeq" id="NP_639414.1">
    <property type="nucleotide sequence ID" value="NC_003902.1"/>
</dbReference>
<dbReference type="RefSeq" id="WP_011039144.1">
    <property type="nucleotide sequence ID" value="NC_003902.1"/>
</dbReference>
<dbReference type="STRING" id="190485.XCC4075"/>
<dbReference type="EnsemblBacteria" id="AAM43296">
    <property type="protein sequence ID" value="AAM43296"/>
    <property type="gene ID" value="XCC4075"/>
</dbReference>
<dbReference type="KEGG" id="xcc:XCC4075"/>
<dbReference type="PATRIC" id="fig|190485.4.peg.4367"/>
<dbReference type="eggNOG" id="COG1971">
    <property type="taxonomic scope" value="Bacteria"/>
</dbReference>
<dbReference type="HOGENOM" id="CLU_096410_0_0_6"/>
<dbReference type="OrthoDB" id="9811590at2"/>
<dbReference type="Proteomes" id="UP000001010">
    <property type="component" value="Chromosome"/>
</dbReference>
<dbReference type="GO" id="GO:0005886">
    <property type="term" value="C:plasma membrane"/>
    <property type="evidence" value="ECO:0000318"/>
    <property type="project" value="GO_Central"/>
</dbReference>
<dbReference type="GO" id="GO:0005384">
    <property type="term" value="F:manganese ion transmembrane transporter activity"/>
    <property type="evidence" value="ECO:0000318"/>
    <property type="project" value="GO_Central"/>
</dbReference>
<dbReference type="GO" id="GO:0030026">
    <property type="term" value="P:intracellular manganese ion homeostasis"/>
    <property type="evidence" value="ECO:0000318"/>
    <property type="project" value="GO_Central"/>
</dbReference>
<dbReference type="GO" id="GO:0140048">
    <property type="term" value="P:manganese ion export across plasma membrane"/>
    <property type="evidence" value="ECO:0000318"/>
    <property type="project" value="GO_Central"/>
</dbReference>
<dbReference type="HAMAP" id="MF_01521">
    <property type="entry name" value="MntP_pump"/>
    <property type="match status" value="1"/>
</dbReference>
<dbReference type="InterPro" id="IPR003810">
    <property type="entry name" value="Mntp/YtaF"/>
</dbReference>
<dbReference type="InterPro" id="IPR022929">
    <property type="entry name" value="Put_MntP"/>
</dbReference>
<dbReference type="PANTHER" id="PTHR35529">
    <property type="entry name" value="MANGANESE EFFLUX PUMP MNTP-RELATED"/>
    <property type="match status" value="1"/>
</dbReference>
<dbReference type="PANTHER" id="PTHR35529:SF1">
    <property type="entry name" value="MANGANESE EFFLUX PUMP MNTP-RELATED"/>
    <property type="match status" value="1"/>
</dbReference>
<dbReference type="Pfam" id="PF02659">
    <property type="entry name" value="Mntp"/>
    <property type="match status" value="1"/>
</dbReference>
<protein>
    <recommendedName>
        <fullName evidence="1">Putative manganese efflux pump MntP</fullName>
    </recommendedName>
</protein>
<name>MNTP_XANCP</name>
<proteinExistence type="inferred from homology"/>
<sequence>MSPLSIVLLGFAMSTDAFAAAIGKGAAMRRPRWRDAVRAGLVFGCIEAITPVIGWMLGRAASDYLAAFDHWIAFGLLGALGAHMIVAGLRNESEVDEALRDTPKRYGLLALAATGFATSIDAMAVGVSLAFLDVHIGVVAAVVGLCTLSMVTAGVMLGRALGALIGKRAEILGGVILILIGSTILYEHLSGAA</sequence>
<keyword id="KW-0997">Cell inner membrane</keyword>
<keyword id="KW-1003">Cell membrane</keyword>
<keyword id="KW-0406">Ion transport</keyword>
<keyword id="KW-0464">Manganese</keyword>
<keyword id="KW-0472">Membrane</keyword>
<keyword id="KW-1185">Reference proteome</keyword>
<keyword id="KW-0812">Transmembrane</keyword>
<keyword id="KW-1133">Transmembrane helix</keyword>
<keyword id="KW-0813">Transport</keyword>
<feature type="chain" id="PRO_0000155671" description="Putative manganese efflux pump MntP">
    <location>
        <begin position="1"/>
        <end position="193"/>
    </location>
</feature>
<feature type="transmembrane region" description="Helical" evidence="1">
    <location>
        <begin position="3"/>
        <end position="23"/>
    </location>
</feature>
<feature type="transmembrane region" description="Helical" evidence="1">
    <location>
        <begin position="37"/>
        <end position="57"/>
    </location>
</feature>
<feature type="transmembrane region" description="Helical" evidence="1">
    <location>
        <begin position="66"/>
        <end position="86"/>
    </location>
</feature>
<feature type="transmembrane region" description="Helical" evidence="1">
    <location>
        <begin position="109"/>
        <end position="131"/>
    </location>
</feature>
<feature type="transmembrane region" description="Helical" evidence="1">
    <location>
        <begin position="146"/>
        <end position="166"/>
    </location>
</feature>
<feature type="transmembrane region" description="Helical" evidence="1">
    <location>
        <begin position="171"/>
        <end position="191"/>
    </location>
</feature>
<gene>
    <name evidence="1" type="primary">mntP</name>
    <name type="ordered locus">XCC4075</name>
</gene>
<organism>
    <name type="scientific">Xanthomonas campestris pv. campestris (strain ATCC 33913 / DSM 3586 / NCPPB 528 / LMG 568 / P 25)</name>
    <dbReference type="NCBI Taxonomy" id="190485"/>
    <lineage>
        <taxon>Bacteria</taxon>
        <taxon>Pseudomonadati</taxon>
        <taxon>Pseudomonadota</taxon>
        <taxon>Gammaproteobacteria</taxon>
        <taxon>Lysobacterales</taxon>
        <taxon>Lysobacteraceae</taxon>
        <taxon>Xanthomonas</taxon>
    </lineage>
</organism>
<reference key="1">
    <citation type="journal article" date="2002" name="Nature">
        <title>Comparison of the genomes of two Xanthomonas pathogens with differing host specificities.</title>
        <authorList>
            <person name="da Silva A.C.R."/>
            <person name="Ferro J.A."/>
            <person name="Reinach F.C."/>
            <person name="Farah C.S."/>
            <person name="Furlan L.R."/>
            <person name="Quaggio R.B."/>
            <person name="Monteiro-Vitorello C.B."/>
            <person name="Van Sluys M.A."/>
            <person name="Almeida N.F. Jr."/>
            <person name="Alves L.M.C."/>
            <person name="do Amaral A.M."/>
            <person name="Bertolini M.C."/>
            <person name="Camargo L.E.A."/>
            <person name="Camarotte G."/>
            <person name="Cannavan F."/>
            <person name="Cardozo J."/>
            <person name="Chambergo F."/>
            <person name="Ciapina L.P."/>
            <person name="Cicarelli R.M.B."/>
            <person name="Coutinho L.L."/>
            <person name="Cursino-Santos J.R."/>
            <person name="El-Dorry H."/>
            <person name="Faria J.B."/>
            <person name="Ferreira A.J.S."/>
            <person name="Ferreira R.C.C."/>
            <person name="Ferro M.I.T."/>
            <person name="Formighieri E.F."/>
            <person name="Franco M.C."/>
            <person name="Greggio C.C."/>
            <person name="Gruber A."/>
            <person name="Katsuyama A.M."/>
            <person name="Kishi L.T."/>
            <person name="Leite R.P."/>
            <person name="Lemos E.G.M."/>
            <person name="Lemos M.V.F."/>
            <person name="Locali E.C."/>
            <person name="Machado M.A."/>
            <person name="Madeira A.M.B.N."/>
            <person name="Martinez-Rossi N.M."/>
            <person name="Martins E.C."/>
            <person name="Meidanis J."/>
            <person name="Menck C.F.M."/>
            <person name="Miyaki C.Y."/>
            <person name="Moon D.H."/>
            <person name="Moreira L.M."/>
            <person name="Novo M.T.M."/>
            <person name="Okura V.K."/>
            <person name="Oliveira M.C."/>
            <person name="Oliveira V.R."/>
            <person name="Pereira H.A."/>
            <person name="Rossi A."/>
            <person name="Sena J.A.D."/>
            <person name="Silva C."/>
            <person name="de Souza R.F."/>
            <person name="Spinola L.A.F."/>
            <person name="Takita M.A."/>
            <person name="Tamura R.E."/>
            <person name="Teixeira E.C."/>
            <person name="Tezza R.I.D."/>
            <person name="Trindade dos Santos M."/>
            <person name="Truffi D."/>
            <person name="Tsai S.M."/>
            <person name="White F.F."/>
            <person name="Setubal J.C."/>
            <person name="Kitajima J.P."/>
        </authorList>
    </citation>
    <scope>NUCLEOTIDE SEQUENCE [LARGE SCALE GENOMIC DNA]</scope>
    <source>
        <strain>ATCC 33913 / DSM 3586 / NCPPB 528 / LMG 568 / P 25</strain>
    </source>
</reference>